<evidence type="ECO:0000255" key="1">
    <source>
        <dbReference type="HAMAP-Rule" id="MF_00175"/>
    </source>
</evidence>
<evidence type="ECO:0000255" key="2">
    <source>
        <dbReference type="PROSITE-ProRule" id="PRU01250"/>
    </source>
</evidence>
<comment type="function">
    <text evidence="1">ATP-dependent specificity component of the Clp protease. It directs the protease to specific substrates. Can perform chaperone functions in the absence of ClpP.</text>
</comment>
<comment type="subunit">
    <text evidence="1">Component of the ClpX-ClpP complex. Forms a hexameric ring that, in the presence of ATP, binds to fourteen ClpP subunits assembled into a disk-like structure with a central cavity, resembling the structure of eukaryotic proteasomes.</text>
</comment>
<comment type="similarity">
    <text evidence="1">Belongs to the ClpX chaperone family.</text>
</comment>
<dbReference type="EMBL" id="CP000238">
    <property type="protein sequence ID" value="ABF14098.1"/>
    <property type="molecule type" value="Genomic_DNA"/>
</dbReference>
<dbReference type="RefSeq" id="WP_011520447.1">
    <property type="nucleotide sequence ID" value="NC_007984.1"/>
</dbReference>
<dbReference type="SMR" id="Q1LTK0"/>
<dbReference type="STRING" id="374463.BCI_0264"/>
<dbReference type="KEGG" id="bci:BCI_0264"/>
<dbReference type="HOGENOM" id="CLU_014218_8_2_6"/>
<dbReference type="OrthoDB" id="9804062at2"/>
<dbReference type="Proteomes" id="UP000002427">
    <property type="component" value="Chromosome"/>
</dbReference>
<dbReference type="GO" id="GO:0009376">
    <property type="term" value="C:HslUV protease complex"/>
    <property type="evidence" value="ECO:0007669"/>
    <property type="project" value="TreeGrafter"/>
</dbReference>
<dbReference type="GO" id="GO:0005524">
    <property type="term" value="F:ATP binding"/>
    <property type="evidence" value="ECO:0007669"/>
    <property type="project" value="UniProtKB-UniRule"/>
</dbReference>
<dbReference type="GO" id="GO:0016887">
    <property type="term" value="F:ATP hydrolysis activity"/>
    <property type="evidence" value="ECO:0007669"/>
    <property type="project" value="InterPro"/>
</dbReference>
<dbReference type="GO" id="GO:0140662">
    <property type="term" value="F:ATP-dependent protein folding chaperone"/>
    <property type="evidence" value="ECO:0007669"/>
    <property type="project" value="InterPro"/>
</dbReference>
<dbReference type="GO" id="GO:0046983">
    <property type="term" value="F:protein dimerization activity"/>
    <property type="evidence" value="ECO:0007669"/>
    <property type="project" value="InterPro"/>
</dbReference>
<dbReference type="GO" id="GO:0051082">
    <property type="term" value="F:unfolded protein binding"/>
    <property type="evidence" value="ECO:0007669"/>
    <property type="project" value="UniProtKB-UniRule"/>
</dbReference>
<dbReference type="GO" id="GO:0008270">
    <property type="term" value="F:zinc ion binding"/>
    <property type="evidence" value="ECO:0007669"/>
    <property type="project" value="InterPro"/>
</dbReference>
<dbReference type="GO" id="GO:0051301">
    <property type="term" value="P:cell division"/>
    <property type="evidence" value="ECO:0007669"/>
    <property type="project" value="TreeGrafter"/>
</dbReference>
<dbReference type="GO" id="GO:0051603">
    <property type="term" value="P:proteolysis involved in protein catabolic process"/>
    <property type="evidence" value="ECO:0007669"/>
    <property type="project" value="TreeGrafter"/>
</dbReference>
<dbReference type="CDD" id="cd19497">
    <property type="entry name" value="RecA-like_ClpX"/>
    <property type="match status" value="1"/>
</dbReference>
<dbReference type="FunFam" id="1.10.8.60:FF:000002">
    <property type="entry name" value="ATP-dependent Clp protease ATP-binding subunit ClpX"/>
    <property type="match status" value="1"/>
</dbReference>
<dbReference type="FunFam" id="3.40.50.300:FF:000005">
    <property type="entry name" value="ATP-dependent Clp protease ATP-binding subunit ClpX"/>
    <property type="match status" value="1"/>
</dbReference>
<dbReference type="Gene3D" id="1.10.8.60">
    <property type="match status" value="1"/>
</dbReference>
<dbReference type="Gene3D" id="6.20.220.10">
    <property type="entry name" value="ClpX chaperone, C4-type zinc finger domain"/>
    <property type="match status" value="1"/>
</dbReference>
<dbReference type="Gene3D" id="3.40.50.300">
    <property type="entry name" value="P-loop containing nucleotide triphosphate hydrolases"/>
    <property type="match status" value="1"/>
</dbReference>
<dbReference type="HAMAP" id="MF_00175">
    <property type="entry name" value="ClpX"/>
    <property type="match status" value="1"/>
</dbReference>
<dbReference type="InterPro" id="IPR003593">
    <property type="entry name" value="AAA+_ATPase"/>
</dbReference>
<dbReference type="InterPro" id="IPR050052">
    <property type="entry name" value="ATP-dep_Clp_protease_ClpX"/>
</dbReference>
<dbReference type="InterPro" id="IPR003959">
    <property type="entry name" value="ATPase_AAA_core"/>
</dbReference>
<dbReference type="InterPro" id="IPR019489">
    <property type="entry name" value="Clp_ATPase_C"/>
</dbReference>
<dbReference type="InterPro" id="IPR004487">
    <property type="entry name" value="Clp_protease_ATP-bd_su_ClpX"/>
</dbReference>
<dbReference type="InterPro" id="IPR046425">
    <property type="entry name" value="ClpX_bact"/>
</dbReference>
<dbReference type="InterPro" id="IPR027417">
    <property type="entry name" value="P-loop_NTPase"/>
</dbReference>
<dbReference type="InterPro" id="IPR010603">
    <property type="entry name" value="Znf_CppX_C4"/>
</dbReference>
<dbReference type="InterPro" id="IPR038366">
    <property type="entry name" value="Znf_CppX_C4_sf"/>
</dbReference>
<dbReference type="NCBIfam" id="TIGR00382">
    <property type="entry name" value="clpX"/>
    <property type="match status" value="1"/>
</dbReference>
<dbReference type="NCBIfam" id="NF003745">
    <property type="entry name" value="PRK05342.1"/>
    <property type="match status" value="1"/>
</dbReference>
<dbReference type="PANTHER" id="PTHR48102:SF7">
    <property type="entry name" value="ATP-DEPENDENT CLP PROTEASE ATP-BINDING SUBUNIT CLPX-LIKE, MITOCHONDRIAL"/>
    <property type="match status" value="1"/>
</dbReference>
<dbReference type="PANTHER" id="PTHR48102">
    <property type="entry name" value="ATP-DEPENDENT CLP PROTEASE ATP-BINDING SUBUNIT CLPX-LIKE, MITOCHONDRIAL-RELATED"/>
    <property type="match status" value="1"/>
</dbReference>
<dbReference type="Pfam" id="PF07724">
    <property type="entry name" value="AAA_2"/>
    <property type="match status" value="1"/>
</dbReference>
<dbReference type="Pfam" id="PF10431">
    <property type="entry name" value="ClpB_D2-small"/>
    <property type="match status" value="1"/>
</dbReference>
<dbReference type="Pfam" id="PF06689">
    <property type="entry name" value="zf-C4_ClpX"/>
    <property type="match status" value="1"/>
</dbReference>
<dbReference type="SMART" id="SM00382">
    <property type="entry name" value="AAA"/>
    <property type="match status" value="1"/>
</dbReference>
<dbReference type="SMART" id="SM01086">
    <property type="entry name" value="ClpB_D2-small"/>
    <property type="match status" value="1"/>
</dbReference>
<dbReference type="SMART" id="SM00994">
    <property type="entry name" value="zf-C4_ClpX"/>
    <property type="match status" value="1"/>
</dbReference>
<dbReference type="SUPFAM" id="SSF57716">
    <property type="entry name" value="Glucocorticoid receptor-like (DNA-binding domain)"/>
    <property type="match status" value="1"/>
</dbReference>
<dbReference type="SUPFAM" id="SSF52540">
    <property type="entry name" value="P-loop containing nucleoside triphosphate hydrolases"/>
    <property type="match status" value="1"/>
</dbReference>
<dbReference type="PROSITE" id="PS51902">
    <property type="entry name" value="CLPX_ZB"/>
    <property type="match status" value="1"/>
</dbReference>
<name>CLPX_BAUCH</name>
<protein>
    <recommendedName>
        <fullName evidence="1">ATP-dependent Clp protease ATP-binding subunit ClpX</fullName>
    </recommendedName>
</protein>
<organism>
    <name type="scientific">Baumannia cicadellinicola subsp. Homalodisca coagulata</name>
    <dbReference type="NCBI Taxonomy" id="374463"/>
    <lineage>
        <taxon>Bacteria</taxon>
        <taxon>Pseudomonadati</taxon>
        <taxon>Pseudomonadota</taxon>
        <taxon>Gammaproteobacteria</taxon>
        <taxon>Candidatus Palibaumannia</taxon>
    </lineage>
</organism>
<gene>
    <name evidence="1" type="primary">clpX</name>
    <name type="ordered locus">BCI_0264</name>
</gene>
<proteinExistence type="inferred from homology"/>
<accession>Q1LTK0</accession>
<reference key="1">
    <citation type="journal article" date="2006" name="PLoS Biol.">
        <title>Metabolic complementarity and genomics of the dual bacterial symbiosis of sharpshooters.</title>
        <authorList>
            <person name="Wu D."/>
            <person name="Daugherty S.C."/>
            <person name="Van Aken S.E."/>
            <person name="Pai G.H."/>
            <person name="Watkins K.L."/>
            <person name="Khouri H."/>
            <person name="Tallon L.J."/>
            <person name="Zaborsky J.M."/>
            <person name="Dunbar H.E."/>
            <person name="Tran P.L."/>
            <person name="Moran N.A."/>
            <person name="Eisen J.A."/>
        </authorList>
    </citation>
    <scope>NUCLEOTIDE SEQUENCE [LARGE SCALE GENOMIC DNA]</scope>
</reference>
<keyword id="KW-0067">ATP-binding</keyword>
<keyword id="KW-0143">Chaperone</keyword>
<keyword id="KW-0479">Metal-binding</keyword>
<keyword id="KW-0547">Nucleotide-binding</keyword>
<keyword id="KW-1185">Reference proteome</keyword>
<keyword id="KW-0862">Zinc</keyword>
<sequence>MTDKHKDSSKQFLYCSFCSKKQHEVRKLIAGPSVCICDECVNLCNDIIREEIKDVVKNSDIQILPTPHDINNHLNNYVIGQEQAKKVLAVAVYNHYKRLHHDTSHNNVELGKSNILLIGPTGSGKTLLADTLARFLHVPFTMADATTLTEAGYVGEDVENILHQLLQKCDYNVQKAQHGIVYIDEIDKISRKSDNPSITRDVSGEGVQQALLKLIEGTVAAVPPHGGRKHPQQDFLKVDTSKILFICGGAFDGLDKVIERRMDTNNSIGFSAIIKLGSDQLNEDKLLTQVEPEDLVKFGLIPEFIGRLPVVATLNELSEEALIRILREPKNALTKQYQALFNLEGVELEFSEEALIAIAKKAMARKTGARGLRSIVEGILLETMYELPSQLHVEKVIINEAVITSNTKPKIIYREPDNKVS</sequence>
<feature type="chain" id="PRO_1000024519" description="ATP-dependent Clp protease ATP-binding subunit ClpX">
    <location>
        <begin position="1"/>
        <end position="421"/>
    </location>
</feature>
<feature type="domain" description="ClpX-type ZB" evidence="2">
    <location>
        <begin position="2"/>
        <end position="56"/>
    </location>
</feature>
<feature type="binding site" evidence="2">
    <location>
        <position position="15"/>
    </location>
    <ligand>
        <name>Zn(2+)</name>
        <dbReference type="ChEBI" id="CHEBI:29105"/>
    </ligand>
</feature>
<feature type="binding site" evidence="2">
    <location>
        <position position="18"/>
    </location>
    <ligand>
        <name>Zn(2+)</name>
        <dbReference type="ChEBI" id="CHEBI:29105"/>
    </ligand>
</feature>
<feature type="binding site" evidence="2">
    <location>
        <position position="37"/>
    </location>
    <ligand>
        <name>Zn(2+)</name>
        <dbReference type="ChEBI" id="CHEBI:29105"/>
    </ligand>
</feature>
<feature type="binding site" evidence="2">
    <location>
        <position position="40"/>
    </location>
    <ligand>
        <name>Zn(2+)</name>
        <dbReference type="ChEBI" id="CHEBI:29105"/>
    </ligand>
</feature>
<feature type="binding site" evidence="1">
    <location>
        <begin position="120"/>
        <end position="127"/>
    </location>
    <ligand>
        <name>ATP</name>
        <dbReference type="ChEBI" id="CHEBI:30616"/>
    </ligand>
</feature>